<accession>Q7PT10</accession>
<evidence type="ECO:0000250" key="1"/>
<evidence type="ECO:0000250" key="2">
    <source>
        <dbReference type="UniProtKB" id="P02828"/>
    </source>
</evidence>
<evidence type="ECO:0000250" key="3">
    <source>
        <dbReference type="UniProtKB" id="P08238"/>
    </source>
</evidence>
<evidence type="ECO:0000255" key="4"/>
<evidence type="ECO:0000256" key="5">
    <source>
        <dbReference type="SAM" id="MobiDB-lite"/>
    </source>
</evidence>
<evidence type="ECO:0000305" key="6"/>
<proteinExistence type="inferred from homology"/>
<keyword id="KW-0067">ATP-binding</keyword>
<keyword id="KW-0143">Chaperone</keyword>
<keyword id="KW-0963">Cytoplasm</keyword>
<keyword id="KW-0547">Nucleotide-binding</keyword>
<keyword id="KW-1185">Reference proteome</keyword>
<keyword id="KW-0346">Stress response</keyword>
<protein>
    <recommendedName>
        <fullName>Heat shock protein 83</fullName>
    </recommendedName>
</protein>
<sequence length="720" mass="82087">MPEPQEGETFAFQAEIAQLMSLIINTFYSNKEIFLRELISNSSDALDKIRYESLTDPSKLESGKELFIKIIPNKEAGTLTLIDTGIGMTKADLVNNLGTIAKSGTKAFMEALQAGADISMIGQFGVGFYSAYLVADKVVVTSKNNDDEQYVWESSAGGSFTVRPDSGEPLGRGTKIVLHIKEDQLEYLEESKIKQIVNKHSQFIGYPIKLLVEKEREKEVSDDEAEEEKKEEKEEKKDDEPKLEDAEDDEDKKDKKKKTVKVKYTEDEELNKTKPIWTRNADDISQEEYGEFYKSLTNDWEDHLAVKHFSVEGQLDFRALLFVPRRMPFDLFENKKKKNNIKLYVRRVFIMDNCEELIPDYLNFIKGVVDSEDLPLNISREMLQQNKILKVIRKNLVKKCLELFEELAEDKETYKKFYDQFSKNLKLGVHEDSQNRQKLADLLRFNTSASGDEYCSLNDYVGRMKENQTQIYFITGESIDQVKNSAFVERVKKRGFEVIYMTEPIDEYVIQQLKEYKGKQLVSVTKEGLELPEDEAEKKKREEDKAKFENLCKVMKSVLESKVEKVMVSNRLVDSPCCIVTSQYGWSANMERIMKAQALRDSSAMGYMAGKKHLEINPDHAIIETLRQRAEADKNDKAVKDLVILLFETALLSSGFSLDEPGTHASRIYRMIKLGLGIDEDEPMTTEESSSGAAAAAPASGDAPPLVDDSEDLSHMEEVD</sequence>
<gene>
    <name evidence="2" type="primary">Hsp83</name>
    <name type="ORF">AGAP006958</name>
</gene>
<comment type="function">
    <text evidence="1">Molecular chaperone that promotes the maturation, structural maintenance and proper regulation of specific target proteins involved for instance in cell cycle control and signal transduction. Undergoes a functional cycle that is linked to its ATPase activity. This cycle probably induces conformational changes in the client proteins, thereby causing their activation. Interacts dynamically with various co-chaperones that modulate its substrate recognition, ATPase cycle and chaperone function. Required for piRNA biogenesis by facilitating loading of piRNAs into PIWI proteins (By similarity).</text>
</comment>
<comment type="subunit">
    <text evidence="3">Homodimer.</text>
</comment>
<comment type="subcellular location">
    <subcellularLocation>
        <location evidence="3">Cytoplasm</location>
    </subcellularLocation>
</comment>
<comment type="domain">
    <text evidence="1">The TPR repeat-binding motif mediates interaction with TPR repeat-containing proteins.</text>
</comment>
<comment type="similarity">
    <text evidence="4">Belongs to the heat shock protein 90 family.</text>
</comment>
<name>HSP83_ANOGA</name>
<feature type="chain" id="PRO_0000233903" description="Heat shock protein 83">
    <location>
        <begin position="1"/>
        <end position="720"/>
    </location>
</feature>
<feature type="region of interest" description="Disordered" evidence="5">
    <location>
        <begin position="217"/>
        <end position="258"/>
    </location>
</feature>
<feature type="region of interest" description="Disordered" evidence="5">
    <location>
        <begin position="681"/>
        <end position="720"/>
    </location>
</feature>
<feature type="short sequence motif" description="TPR repeat-binding">
    <location>
        <begin position="716"/>
        <end position="720"/>
    </location>
</feature>
<feature type="compositionally biased region" description="Basic and acidic residues" evidence="5">
    <location>
        <begin position="227"/>
        <end position="244"/>
    </location>
</feature>
<feature type="compositionally biased region" description="Low complexity" evidence="5">
    <location>
        <begin position="689"/>
        <end position="705"/>
    </location>
</feature>
<feature type="binding site" evidence="1">
    <location>
        <position position="41"/>
    </location>
    <ligand>
        <name>ATP</name>
        <dbReference type="ChEBI" id="CHEBI:30616"/>
    </ligand>
</feature>
<feature type="binding site" evidence="1">
    <location>
        <position position="83"/>
    </location>
    <ligand>
        <name>ATP</name>
        <dbReference type="ChEBI" id="CHEBI:30616"/>
    </ligand>
</feature>
<feature type="binding site" evidence="1">
    <location>
        <position position="102"/>
    </location>
    <ligand>
        <name>ATP</name>
        <dbReference type="ChEBI" id="CHEBI:30616"/>
    </ligand>
</feature>
<feature type="binding site" evidence="1">
    <location>
        <position position="128"/>
    </location>
    <ligand>
        <name>ATP</name>
        <dbReference type="ChEBI" id="CHEBI:30616"/>
    </ligand>
</feature>
<feature type="binding site" evidence="1">
    <location>
        <position position="380"/>
    </location>
    <ligand>
        <name>ATP</name>
        <dbReference type="ChEBI" id="CHEBI:30616"/>
    </ligand>
</feature>
<reference evidence="6" key="1">
    <citation type="journal article" date="2002" name="Science">
        <title>The genome sequence of the malaria mosquito Anopheles gambiae.</title>
        <authorList>
            <person name="Holt R.A."/>
            <person name="Subramanian G.M."/>
            <person name="Halpern A."/>
            <person name="Sutton G.G."/>
            <person name="Charlab R."/>
            <person name="Nusskern D.R."/>
            <person name="Wincker P."/>
            <person name="Clark A.G."/>
            <person name="Ribeiro J.M.C."/>
            <person name="Wides R."/>
            <person name="Salzberg S.L."/>
            <person name="Loftus B.J."/>
            <person name="Yandell M.D."/>
            <person name="Majoros W.H."/>
            <person name="Rusch D.B."/>
            <person name="Lai Z."/>
            <person name="Kraft C.L."/>
            <person name="Abril J.F."/>
            <person name="Anthouard V."/>
            <person name="Arensburger P."/>
            <person name="Atkinson P.W."/>
            <person name="Baden H."/>
            <person name="de Berardinis V."/>
            <person name="Baldwin D."/>
            <person name="Benes V."/>
            <person name="Biedler J."/>
            <person name="Blass C."/>
            <person name="Bolanos R."/>
            <person name="Boscus D."/>
            <person name="Barnstead M."/>
            <person name="Cai S."/>
            <person name="Center A."/>
            <person name="Chaturverdi K."/>
            <person name="Christophides G.K."/>
            <person name="Chrystal M.A.M."/>
            <person name="Clamp M."/>
            <person name="Cravchik A."/>
            <person name="Curwen V."/>
            <person name="Dana A."/>
            <person name="Delcher A."/>
            <person name="Dew I."/>
            <person name="Evans C.A."/>
            <person name="Flanigan M."/>
            <person name="Grundschober-Freimoser A."/>
            <person name="Friedli L."/>
            <person name="Gu Z."/>
            <person name="Guan P."/>
            <person name="Guigo R."/>
            <person name="Hillenmeyer M.E."/>
            <person name="Hladun S.L."/>
            <person name="Hogan J.R."/>
            <person name="Hong Y.S."/>
            <person name="Hoover J."/>
            <person name="Jaillon O."/>
            <person name="Ke Z."/>
            <person name="Kodira C.D."/>
            <person name="Kokoza E."/>
            <person name="Koutsos A."/>
            <person name="Letunic I."/>
            <person name="Levitsky A.A."/>
            <person name="Liang Y."/>
            <person name="Lin J.-J."/>
            <person name="Lobo N.F."/>
            <person name="Lopez J.R."/>
            <person name="Malek J.A."/>
            <person name="McIntosh T.C."/>
            <person name="Meister S."/>
            <person name="Miller J.R."/>
            <person name="Mobarry C."/>
            <person name="Mongin E."/>
            <person name="Murphy S.D."/>
            <person name="O'Brochta D.A."/>
            <person name="Pfannkoch C."/>
            <person name="Qi R."/>
            <person name="Regier M.A."/>
            <person name="Remington K."/>
            <person name="Shao H."/>
            <person name="Sharakhova M.V."/>
            <person name="Sitter C.D."/>
            <person name="Shetty J."/>
            <person name="Smith T.J."/>
            <person name="Strong R."/>
            <person name="Sun J."/>
            <person name="Thomasova D."/>
            <person name="Ton L.Q."/>
            <person name="Topalis P."/>
            <person name="Tu Z.J."/>
            <person name="Unger M.F."/>
            <person name="Walenz B."/>
            <person name="Wang A.H."/>
            <person name="Wang J."/>
            <person name="Wang M."/>
            <person name="Wang X."/>
            <person name="Woodford K.J."/>
            <person name="Wortman J.R."/>
            <person name="Wu M."/>
            <person name="Yao A."/>
            <person name="Zdobnov E.M."/>
            <person name="Zhang H."/>
            <person name="Zhao Q."/>
            <person name="Zhao S."/>
            <person name="Zhu S.C."/>
            <person name="Zhimulev I."/>
            <person name="Coluzzi M."/>
            <person name="della Torre A."/>
            <person name="Roth C.W."/>
            <person name="Louis C."/>
            <person name="Kalush F."/>
            <person name="Mural R.J."/>
            <person name="Myers E.W."/>
            <person name="Adams M.D."/>
            <person name="Smith H.O."/>
            <person name="Broder S."/>
            <person name="Gardner M.J."/>
            <person name="Fraser C.M."/>
            <person name="Birney E."/>
            <person name="Bork P."/>
            <person name="Brey P.T."/>
            <person name="Venter J.C."/>
            <person name="Weissenbach J."/>
            <person name="Kafatos F.C."/>
            <person name="Collins F.H."/>
            <person name="Hoffman S.L."/>
        </authorList>
    </citation>
    <scope>NUCLEOTIDE SEQUENCE [LARGE SCALE GENOMIC DNA]</scope>
    <source>
        <strain>PEST</strain>
    </source>
</reference>
<organism>
    <name type="scientific">Anopheles gambiae</name>
    <name type="common">African malaria mosquito</name>
    <dbReference type="NCBI Taxonomy" id="7165"/>
    <lineage>
        <taxon>Eukaryota</taxon>
        <taxon>Metazoa</taxon>
        <taxon>Ecdysozoa</taxon>
        <taxon>Arthropoda</taxon>
        <taxon>Hexapoda</taxon>
        <taxon>Insecta</taxon>
        <taxon>Pterygota</taxon>
        <taxon>Neoptera</taxon>
        <taxon>Endopterygota</taxon>
        <taxon>Diptera</taxon>
        <taxon>Nematocera</taxon>
        <taxon>Culicoidea</taxon>
        <taxon>Culicidae</taxon>
        <taxon>Anophelinae</taxon>
        <taxon>Anopheles</taxon>
    </lineage>
</organism>
<dbReference type="EMBL" id="AAAB01008807">
    <property type="protein sequence ID" value="EAA04712.4"/>
    <property type="molecule type" value="Genomic_DNA"/>
</dbReference>
<dbReference type="RefSeq" id="XP_308800.3">
    <property type="nucleotide sequence ID" value="XM_308800.4"/>
</dbReference>
<dbReference type="SMR" id="Q7PT10"/>
<dbReference type="BioGRID" id="1936241">
    <property type="interactions" value="1"/>
</dbReference>
<dbReference type="FunCoup" id="Q7PT10">
    <property type="interactions" value="1466"/>
</dbReference>
<dbReference type="STRING" id="7165.Q7PT10"/>
<dbReference type="PaxDb" id="7165-AGAP006958-PA"/>
<dbReference type="EnsemblMetazoa" id="AGAP006958-RA">
    <property type="protein sequence ID" value="AGAP006958-PA"/>
    <property type="gene ID" value="AGAP006958"/>
</dbReference>
<dbReference type="GeneID" id="1270128"/>
<dbReference type="KEGG" id="aga:1270128"/>
<dbReference type="VEuPathDB" id="VectorBase:AGAMI1_005937"/>
<dbReference type="VEuPathDB" id="VectorBase:AGAP006958"/>
<dbReference type="eggNOG" id="KOG0019">
    <property type="taxonomic scope" value="Eukaryota"/>
</dbReference>
<dbReference type="HOGENOM" id="CLU_006684_1_3_1"/>
<dbReference type="InParanoid" id="Q7PT10"/>
<dbReference type="OMA" id="CHENVIY"/>
<dbReference type="PhylomeDB" id="Q7PT10"/>
<dbReference type="Proteomes" id="UP000007062">
    <property type="component" value="Chromosome 2L"/>
</dbReference>
<dbReference type="GO" id="GO:0005829">
    <property type="term" value="C:cytosol"/>
    <property type="evidence" value="ECO:0000318"/>
    <property type="project" value="GO_Central"/>
</dbReference>
<dbReference type="GO" id="GO:0048471">
    <property type="term" value="C:perinuclear region of cytoplasm"/>
    <property type="evidence" value="ECO:0000318"/>
    <property type="project" value="GO_Central"/>
</dbReference>
<dbReference type="GO" id="GO:0005886">
    <property type="term" value="C:plasma membrane"/>
    <property type="evidence" value="ECO:0000318"/>
    <property type="project" value="GO_Central"/>
</dbReference>
<dbReference type="GO" id="GO:0032991">
    <property type="term" value="C:protein-containing complex"/>
    <property type="evidence" value="ECO:0000318"/>
    <property type="project" value="GO_Central"/>
</dbReference>
<dbReference type="GO" id="GO:0005524">
    <property type="term" value="F:ATP binding"/>
    <property type="evidence" value="ECO:0000318"/>
    <property type="project" value="GO_Central"/>
</dbReference>
<dbReference type="GO" id="GO:0016887">
    <property type="term" value="F:ATP hydrolysis activity"/>
    <property type="evidence" value="ECO:0000318"/>
    <property type="project" value="GO_Central"/>
</dbReference>
<dbReference type="GO" id="GO:0140662">
    <property type="term" value="F:ATP-dependent protein folding chaperone"/>
    <property type="evidence" value="ECO:0007669"/>
    <property type="project" value="InterPro"/>
</dbReference>
<dbReference type="GO" id="GO:0051082">
    <property type="term" value="F:unfolded protein binding"/>
    <property type="evidence" value="ECO:0000318"/>
    <property type="project" value="GO_Central"/>
</dbReference>
<dbReference type="GO" id="GO:0034605">
    <property type="term" value="P:cellular response to heat"/>
    <property type="evidence" value="ECO:0000318"/>
    <property type="project" value="GO_Central"/>
</dbReference>
<dbReference type="GO" id="GO:0006457">
    <property type="term" value="P:protein folding"/>
    <property type="evidence" value="ECO:0000318"/>
    <property type="project" value="GO_Central"/>
</dbReference>
<dbReference type="GO" id="GO:0050821">
    <property type="term" value="P:protein stabilization"/>
    <property type="evidence" value="ECO:0000318"/>
    <property type="project" value="GO_Central"/>
</dbReference>
<dbReference type="CDD" id="cd16927">
    <property type="entry name" value="HATPase_Hsp90-like"/>
    <property type="match status" value="1"/>
</dbReference>
<dbReference type="FunFam" id="1.20.120.790:FF:000001">
    <property type="entry name" value="Heat shock protein 90 alpha"/>
    <property type="match status" value="1"/>
</dbReference>
<dbReference type="FunFam" id="3.30.230.80:FF:000001">
    <property type="entry name" value="Heat shock protein 90 alpha"/>
    <property type="match status" value="1"/>
</dbReference>
<dbReference type="FunFam" id="3.40.50.11260:FF:000001">
    <property type="entry name" value="Heat shock protein 90 alpha"/>
    <property type="match status" value="1"/>
</dbReference>
<dbReference type="FunFam" id="3.30.565.10:FF:000001">
    <property type="entry name" value="Heat shock protein HSP 90-alpha"/>
    <property type="match status" value="1"/>
</dbReference>
<dbReference type="Gene3D" id="3.30.230.80">
    <property type="match status" value="1"/>
</dbReference>
<dbReference type="Gene3D" id="3.40.50.11260">
    <property type="match status" value="1"/>
</dbReference>
<dbReference type="Gene3D" id="1.20.120.790">
    <property type="entry name" value="Heat shock protein 90, C-terminal domain"/>
    <property type="match status" value="1"/>
</dbReference>
<dbReference type="Gene3D" id="3.30.565.10">
    <property type="entry name" value="Histidine kinase-like ATPase, C-terminal domain"/>
    <property type="match status" value="1"/>
</dbReference>
<dbReference type="HAMAP" id="MF_00505">
    <property type="entry name" value="HSP90"/>
    <property type="match status" value="1"/>
</dbReference>
<dbReference type="InterPro" id="IPR036890">
    <property type="entry name" value="HATPase_C_sf"/>
</dbReference>
<dbReference type="InterPro" id="IPR019805">
    <property type="entry name" value="Heat_shock_protein_90_CS"/>
</dbReference>
<dbReference type="InterPro" id="IPR037196">
    <property type="entry name" value="HSP90_C"/>
</dbReference>
<dbReference type="InterPro" id="IPR001404">
    <property type="entry name" value="Hsp90_fam"/>
</dbReference>
<dbReference type="InterPro" id="IPR020575">
    <property type="entry name" value="Hsp90_N"/>
</dbReference>
<dbReference type="InterPro" id="IPR020568">
    <property type="entry name" value="Ribosomal_Su5_D2-typ_SF"/>
</dbReference>
<dbReference type="NCBIfam" id="NF003555">
    <property type="entry name" value="PRK05218.1"/>
    <property type="match status" value="1"/>
</dbReference>
<dbReference type="PANTHER" id="PTHR11528">
    <property type="entry name" value="HEAT SHOCK PROTEIN 90 FAMILY MEMBER"/>
    <property type="match status" value="1"/>
</dbReference>
<dbReference type="Pfam" id="PF13589">
    <property type="entry name" value="HATPase_c_3"/>
    <property type="match status" value="1"/>
</dbReference>
<dbReference type="Pfam" id="PF00183">
    <property type="entry name" value="HSP90"/>
    <property type="match status" value="1"/>
</dbReference>
<dbReference type="PIRSF" id="PIRSF002583">
    <property type="entry name" value="Hsp90"/>
    <property type="match status" value="1"/>
</dbReference>
<dbReference type="PRINTS" id="PR00775">
    <property type="entry name" value="HEATSHOCK90"/>
</dbReference>
<dbReference type="SMART" id="SM00387">
    <property type="entry name" value="HATPase_c"/>
    <property type="match status" value="1"/>
</dbReference>
<dbReference type="SUPFAM" id="SSF55874">
    <property type="entry name" value="ATPase domain of HSP90 chaperone/DNA topoisomerase II/histidine kinase"/>
    <property type="match status" value="1"/>
</dbReference>
<dbReference type="SUPFAM" id="SSF110942">
    <property type="entry name" value="HSP90 C-terminal domain"/>
    <property type="match status" value="1"/>
</dbReference>
<dbReference type="SUPFAM" id="SSF54211">
    <property type="entry name" value="Ribosomal protein S5 domain 2-like"/>
    <property type="match status" value="1"/>
</dbReference>
<dbReference type="PROSITE" id="PS00298">
    <property type="entry name" value="HSP90"/>
    <property type="match status" value="1"/>
</dbReference>